<protein>
    <recommendedName>
        <fullName evidence="9">UBX domain-containing protein 2A</fullName>
    </recommendedName>
    <alternativeName>
        <fullName evidence="1">UBX domain-containing protein 4</fullName>
    </alternativeName>
</protein>
<evidence type="ECO:0000250" key="1">
    <source>
        <dbReference type="UniProtKB" id="P68543"/>
    </source>
</evidence>
<evidence type="ECO:0000255" key="2">
    <source>
        <dbReference type="PROSITE-ProRule" id="PRU00215"/>
    </source>
</evidence>
<evidence type="ECO:0000255" key="3">
    <source>
        <dbReference type="PROSITE-ProRule" id="PRU00732"/>
    </source>
</evidence>
<evidence type="ECO:0000256" key="4">
    <source>
        <dbReference type="SAM" id="MobiDB-lite"/>
    </source>
</evidence>
<evidence type="ECO:0000269" key="5">
    <source>
    </source>
</evidence>
<evidence type="ECO:0000269" key="6">
    <source>
    </source>
</evidence>
<evidence type="ECO:0000269" key="7">
    <source>
    </source>
</evidence>
<evidence type="ECO:0000303" key="8">
    <source>
    </source>
</evidence>
<evidence type="ECO:0000305" key="9"/>
<evidence type="ECO:0000312" key="10">
    <source>
        <dbReference type="MGI" id="MGI:2442310"/>
    </source>
</evidence>
<accession>Q99KJ0</accession>
<organism>
    <name type="scientific">Mus musculus</name>
    <name type="common">Mouse</name>
    <dbReference type="NCBI Taxonomy" id="10090"/>
    <lineage>
        <taxon>Eukaryota</taxon>
        <taxon>Metazoa</taxon>
        <taxon>Chordata</taxon>
        <taxon>Craniata</taxon>
        <taxon>Vertebrata</taxon>
        <taxon>Euteleostomi</taxon>
        <taxon>Mammalia</taxon>
        <taxon>Eutheria</taxon>
        <taxon>Euarchontoglires</taxon>
        <taxon>Glires</taxon>
        <taxon>Rodentia</taxon>
        <taxon>Myomorpha</taxon>
        <taxon>Muroidea</taxon>
        <taxon>Muridae</taxon>
        <taxon>Murinae</taxon>
        <taxon>Mus</taxon>
        <taxon>Mus</taxon>
    </lineage>
</organism>
<keyword id="KW-0966">Cell projection</keyword>
<keyword id="KW-0963">Cytoplasm</keyword>
<keyword id="KW-0256">Endoplasmic reticulum</keyword>
<keyword id="KW-0333">Golgi apparatus</keyword>
<keyword id="KW-0539">Nucleus</keyword>
<keyword id="KW-1185">Reference proteome</keyword>
<keyword id="KW-0832">Ubl conjugation</keyword>
<sequence length="258" mass="29197">MKEVDNLDSIKEEWACETGPPDSQPLNDNQQKDCEYFVDSLFEEAGKAGAKCLSPTEQKKQVDVNIKLWKNGFTVNDDFRSYSDGASQQFLNSIKKGELPSELWGIFDKEEVDVKVEDKKNEVCMSTKPVFQPFSGQGHRLGSATPRIVSKAKSVEVDNKSTLSAVSLNNLEPITRIQIWLANGERTVQRFNVSHRVSHIKDFIEKYQGSQRSPPFALATALPFLRFLDETLTLEEADLKNAVIIQRLQKTAEPFRKL</sequence>
<feature type="chain" id="PRO_0000211032" description="UBX domain-containing protein 2A">
    <location>
        <begin position="1"/>
        <end position="258"/>
    </location>
</feature>
<feature type="domain" description="SEP" evidence="3">
    <location>
        <begin position="61"/>
        <end position="125"/>
    </location>
</feature>
<feature type="domain" description="UBX" evidence="2">
    <location>
        <begin position="170"/>
        <end position="247"/>
    </location>
</feature>
<feature type="region of interest" description="Required for inhibition of CHRNA3 ubiquitination and translocation of CHRNA3 to the plasma membrane resulting in an increase in acetylcholine-gated nicotinic acetylcholine receptor currents" evidence="5">
    <location>
        <begin position="1"/>
        <end position="165"/>
    </location>
</feature>
<feature type="region of interest" description="Required for interaction with CHRNA3" evidence="1">
    <location>
        <begin position="1"/>
        <end position="152"/>
    </location>
</feature>
<feature type="region of interest" description="Disordered" evidence="4">
    <location>
        <begin position="1"/>
        <end position="30"/>
    </location>
</feature>
<feature type="region of interest" description="Required for interaction with VCP" evidence="1">
    <location>
        <begin position="168"/>
        <end position="258"/>
    </location>
</feature>
<feature type="compositionally biased region" description="Basic and acidic residues" evidence="4">
    <location>
        <begin position="1"/>
        <end position="14"/>
    </location>
</feature>
<reference key="1">
    <citation type="journal article" date="2005" name="Science">
        <title>The transcriptional landscape of the mammalian genome.</title>
        <authorList>
            <person name="Carninci P."/>
            <person name="Kasukawa T."/>
            <person name="Katayama S."/>
            <person name="Gough J."/>
            <person name="Frith M.C."/>
            <person name="Maeda N."/>
            <person name="Oyama R."/>
            <person name="Ravasi T."/>
            <person name="Lenhard B."/>
            <person name="Wells C."/>
            <person name="Kodzius R."/>
            <person name="Shimokawa K."/>
            <person name="Bajic V.B."/>
            <person name="Brenner S.E."/>
            <person name="Batalov S."/>
            <person name="Forrest A.R."/>
            <person name="Zavolan M."/>
            <person name="Davis M.J."/>
            <person name="Wilming L.G."/>
            <person name="Aidinis V."/>
            <person name="Allen J.E."/>
            <person name="Ambesi-Impiombato A."/>
            <person name="Apweiler R."/>
            <person name="Aturaliya R.N."/>
            <person name="Bailey T.L."/>
            <person name="Bansal M."/>
            <person name="Baxter L."/>
            <person name="Beisel K.W."/>
            <person name="Bersano T."/>
            <person name="Bono H."/>
            <person name="Chalk A.M."/>
            <person name="Chiu K.P."/>
            <person name="Choudhary V."/>
            <person name="Christoffels A."/>
            <person name="Clutterbuck D.R."/>
            <person name="Crowe M.L."/>
            <person name="Dalla E."/>
            <person name="Dalrymple B.P."/>
            <person name="de Bono B."/>
            <person name="Della Gatta G."/>
            <person name="di Bernardo D."/>
            <person name="Down T."/>
            <person name="Engstrom P."/>
            <person name="Fagiolini M."/>
            <person name="Faulkner G."/>
            <person name="Fletcher C.F."/>
            <person name="Fukushima T."/>
            <person name="Furuno M."/>
            <person name="Futaki S."/>
            <person name="Gariboldi M."/>
            <person name="Georgii-Hemming P."/>
            <person name="Gingeras T.R."/>
            <person name="Gojobori T."/>
            <person name="Green R.E."/>
            <person name="Gustincich S."/>
            <person name="Harbers M."/>
            <person name="Hayashi Y."/>
            <person name="Hensch T.K."/>
            <person name="Hirokawa N."/>
            <person name="Hill D."/>
            <person name="Huminiecki L."/>
            <person name="Iacono M."/>
            <person name="Ikeo K."/>
            <person name="Iwama A."/>
            <person name="Ishikawa T."/>
            <person name="Jakt M."/>
            <person name="Kanapin A."/>
            <person name="Katoh M."/>
            <person name="Kawasawa Y."/>
            <person name="Kelso J."/>
            <person name="Kitamura H."/>
            <person name="Kitano H."/>
            <person name="Kollias G."/>
            <person name="Krishnan S.P."/>
            <person name="Kruger A."/>
            <person name="Kummerfeld S.K."/>
            <person name="Kurochkin I.V."/>
            <person name="Lareau L.F."/>
            <person name="Lazarevic D."/>
            <person name="Lipovich L."/>
            <person name="Liu J."/>
            <person name="Liuni S."/>
            <person name="McWilliam S."/>
            <person name="Madan Babu M."/>
            <person name="Madera M."/>
            <person name="Marchionni L."/>
            <person name="Matsuda H."/>
            <person name="Matsuzawa S."/>
            <person name="Miki H."/>
            <person name="Mignone F."/>
            <person name="Miyake S."/>
            <person name="Morris K."/>
            <person name="Mottagui-Tabar S."/>
            <person name="Mulder N."/>
            <person name="Nakano N."/>
            <person name="Nakauchi H."/>
            <person name="Ng P."/>
            <person name="Nilsson R."/>
            <person name="Nishiguchi S."/>
            <person name="Nishikawa S."/>
            <person name="Nori F."/>
            <person name="Ohara O."/>
            <person name="Okazaki Y."/>
            <person name="Orlando V."/>
            <person name="Pang K.C."/>
            <person name="Pavan W.J."/>
            <person name="Pavesi G."/>
            <person name="Pesole G."/>
            <person name="Petrovsky N."/>
            <person name="Piazza S."/>
            <person name="Reed J."/>
            <person name="Reid J.F."/>
            <person name="Ring B.Z."/>
            <person name="Ringwald M."/>
            <person name="Rost B."/>
            <person name="Ruan Y."/>
            <person name="Salzberg S.L."/>
            <person name="Sandelin A."/>
            <person name="Schneider C."/>
            <person name="Schoenbach C."/>
            <person name="Sekiguchi K."/>
            <person name="Semple C.A."/>
            <person name="Seno S."/>
            <person name="Sessa L."/>
            <person name="Sheng Y."/>
            <person name="Shibata Y."/>
            <person name="Shimada H."/>
            <person name="Shimada K."/>
            <person name="Silva D."/>
            <person name="Sinclair B."/>
            <person name="Sperling S."/>
            <person name="Stupka E."/>
            <person name="Sugiura K."/>
            <person name="Sultana R."/>
            <person name="Takenaka Y."/>
            <person name="Taki K."/>
            <person name="Tammoja K."/>
            <person name="Tan S.L."/>
            <person name="Tang S."/>
            <person name="Taylor M.S."/>
            <person name="Tegner J."/>
            <person name="Teichmann S.A."/>
            <person name="Ueda H.R."/>
            <person name="van Nimwegen E."/>
            <person name="Verardo R."/>
            <person name="Wei C.L."/>
            <person name="Yagi K."/>
            <person name="Yamanishi H."/>
            <person name="Zabarovsky E."/>
            <person name="Zhu S."/>
            <person name="Zimmer A."/>
            <person name="Hide W."/>
            <person name="Bult C."/>
            <person name="Grimmond S.M."/>
            <person name="Teasdale R.D."/>
            <person name="Liu E.T."/>
            <person name="Brusic V."/>
            <person name="Quackenbush J."/>
            <person name="Wahlestedt C."/>
            <person name="Mattick J.S."/>
            <person name="Hume D.A."/>
            <person name="Kai C."/>
            <person name="Sasaki D."/>
            <person name="Tomaru Y."/>
            <person name="Fukuda S."/>
            <person name="Kanamori-Katayama M."/>
            <person name="Suzuki M."/>
            <person name="Aoki J."/>
            <person name="Arakawa T."/>
            <person name="Iida J."/>
            <person name="Imamura K."/>
            <person name="Itoh M."/>
            <person name="Kato T."/>
            <person name="Kawaji H."/>
            <person name="Kawagashira N."/>
            <person name="Kawashima T."/>
            <person name="Kojima M."/>
            <person name="Kondo S."/>
            <person name="Konno H."/>
            <person name="Nakano K."/>
            <person name="Ninomiya N."/>
            <person name="Nishio T."/>
            <person name="Okada M."/>
            <person name="Plessy C."/>
            <person name="Shibata K."/>
            <person name="Shiraki T."/>
            <person name="Suzuki S."/>
            <person name="Tagami M."/>
            <person name="Waki K."/>
            <person name="Watahiki A."/>
            <person name="Okamura-Oho Y."/>
            <person name="Suzuki H."/>
            <person name="Kawai J."/>
            <person name="Hayashizaki Y."/>
        </authorList>
    </citation>
    <scope>NUCLEOTIDE SEQUENCE [LARGE SCALE MRNA]</scope>
    <source>
        <strain>C57BL/6J</strain>
        <tissue>Medulla oblongata</tissue>
        <tissue>Thymus</tissue>
    </source>
</reference>
<reference key="2">
    <citation type="journal article" date="2004" name="Genome Res.">
        <title>The status, quality, and expansion of the NIH full-length cDNA project: the Mammalian Gene Collection (MGC).</title>
        <authorList>
            <consortium name="The MGC Project Team"/>
        </authorList>
    </citation>
    <scope>NUCLEOTIDE SEQUENCE [LARGE SCALE MRNA]</scope>
    <source>
        <strain>FVB/N</strain>
        <tissue>Mammary tumor</tissue>
    </source>
</reference>
<reference key="3">
    <citation type="journal article" date="2009" name="J. Neurosci.">
        <title>UBXD4, a UBX-containing protein, regulates the cell surface number and stability of alpha3-containing nicotinic acetylcholine receptors.</title>
        <authorList>
            <person name="Rezvani K."/>
            <person name="Teng Y."/>
            <person name="Pan Y."/>
            <person name="Dani J.A."/>
            <person name="Lindstrom J."/>
            <person name="Garcia Gras E.A."/>
            <person name="McIntosh J.M."/>
            <person name="De Biasi M."/>
        </authorList>
    </citation>
    <scope>FUNCTION</scope>
    <scope>INTERACTION WITH CHRNA3</scope>
    <scope>TISSUE SPECIFICITY</scope>
    <scope>UBIQUTINATION</scope>
</reference>
<reference key="4">
    <citation type="journal article" date="2010" name="Cell">
        <title>A tissue-specific atlas of mouse protein phosphorylation and expression.</title>
        <authorList>
            <person name="Huttlin E.L."/>
            <person name="Jedrychowski M.P."/>
            <person name="Elias J.E."/>
            <person name="Goswami T."/>
            <person name="Rad R."/>
            <person name="Beausoleil S.A."/>
            <person name="Villen J."/>
            <person name="Haas W."/>
            <person name="Sowa M.E."/>
            <person name="Gygi S.P."/>
        </authorList>
    </citation>
    <scope>IDENTIFICATION BY MASS SPECTROMETRY [LARGE SCALE ANALYSIS]</scope>
    <source>
        <tissue>Pancreas</tissue>
    </source>
</reference>
<reference key="5">
    <citation type="journal article" date="2015" name="Biochem. Pharmacol.">
        <title>UBXN2A regulates nicotinic receptor degradation by modulating the E3 ligase activity of CHIP.</title>
        <authorList>
            <person name="Teng Y."/>
            <person name="Rezvani K."/>
            <person name="De Biasi M."/>
        </authorList>
    </citation>
    <scope>SUBCELLULAR LOCATION</scope>
    <scope>TISSUE SPECIFICITY</scope>
</reference>
<reference key="6">
    <citation type="journal article" date="2023" name="Oncogene">
        <title>UBXN2A suppresses the Rictor-mTORC2 signaling pathway, an established tumorigenic pathway in human colorectal cancer.</title>
        <authorList>
            <person name="Sane S."/>
            <person name="Srinivasan R."/>
            <person name="Potts R.A."/>
            <person name="Eikanger M."/>
            <person name="Zagirova D."/>
            <person name="Freeling J."/>
            <person name="Reihe C.A."/>
            <person name="Antony R.M."/>
            <person name="Gupta B.K."/>
            <person name="Lynch D."/>
            <person name="Bleeker J."/>
            <person name="Turaihi H."/>
            <person name="Pillatzki A."/>
            <person name="Zhou W."/>
            <person name="Luo X."/>
            <person name="Linnebacher M."/>
            <person name="Agany D."/>
            <person name="Zohim E.G."/>
            <person name="Humphrey L.E."/>
            <person name="Black A.R."/>
            <person name="Rezvani K."/>
        </authorList>
    </citation>
    <scope>DISRUPTION PHENOTYPE</scope>
</reference>
<gene>
    <name evidence="10" type="primary">Ubxn2a</name>
    <name evidence="8" type="synonym">Ubxd4</name>
</gene>
<name>UBX2A_MOUSE</name>
<proteinExistence type="evidence at protein level"/>
<dbReference type="EMBL" id="AK031821">
    <property type="protein sequence ID" value="BAC27566.1"/>
    <property type="molecule type" value="mRNA"/>
</dbReference>
<dbReference type="EMBL" id="AK041556">
    <property type="protein sequence ID" value="BAC30984.1"/>
    <property type="molecule type" value="mRNA"/>
</dbReference>
<dbReference type="EMBL" id="BC004632">
    <property type="protein sequence ID" value="AAH04632.1"/>
    <property type="molecule type" value="mRNA"/>
</dbReference>
<dbReference type="CCDS" id="CCDS25795.1"/>
<dbReference type="RefSeq" id="NP_663416.1">
    <property type="nucleotide sequence ID" value="NM_145441.4"/>
</dbReference>
<dbReference type="SMR" id="Q99KJ0"/>
<dbReference type="BioGRID" id="229908">
    <property type="interactions" value="6"/>
</dbReference>
<dbReference type="FunCoup" id="Q99KJ0">
    <property type="interactions" value="2043"/>
</dbReference>
<dbReference type="STRING" id="10090.ENSMUSP00000020962"/>
<dbReference type="GlyGen" id="Q99KJ0">
    <property type="glycosylation" value="1 site, 1 N-linked glycan (1 site)"/>
</dbReference>
<dbReference type="iPTMnet" id="Q99KJ0"/>
<dbReference type="PhosphoSitePlus" id="Q99KJ0"/>
<dbReference type="jPOST" id="Q99KJ0"/>
<dbReference type="PaxDb" id="10090-ENSMUSP00000020962"/>
<dbReference type="PeptideAtlas" id="Q99KJ0"/>
<dbReference type="ProteomicsDB" id="298425"/>
<dbReference type="Antibodypedia" id="58573">
    <property type="antibodies" value="94 antibodies from 18 providers"/>
</dbReference>
<dbReference type="DNASU" id="217379"/>
<dbReference type="Ensembl" id="ENSMUST00000020962.12">
    <property type="protein sequence ID" value="ENSMUSP00000020962.6"/>
    <property type="gene ID" value="ENSMUSG00000020634.13"/>
</dbReference>
<dbReference type="Ensembl" id="ENSMUST00000142867.8">
    <property type="protein sequence ID" value="ENSMUSP00000118834.2"/>
    <property type="gene ID" value="ENSMUSG00000020634.13"/>
</dbReference>
<dbReference type="GeneID" id="217379"/>
<dbReference type="KEGG" id="mmu:217379"/>
<dbReference type="UCSC" id="uc007myr.1">
    <property type="organism name" value="mouse"/>
</dbReference>
<dbReference type="AGR" id="MGI:2442310"/>
<dbReference type="CTD" id="165324"/>
<dbReference type="MGI" id="MGI:2442310">
    <property type="gene designation" value="Ubxn2a"/>
</dbReference>
<dbReference type="VEuPathDB" id="HostDB:ENSMUSG00000020634"/>
<dbReference type="eggNOG" id="KOG2086">
    <property type="taxonomic scope" value="Eukaryota"/>
</dbReference>
<dbReference type="GeneTree" id="ENSGT00520000055567"/>
<dbReference type="HOGENOM" id="CLU_029402_3_1_1"/>
<dbReference type="InParanoid" id="Q99KJ0"/>
<dbReference type="OMA" id="SRCQRSC"/>
<dbReference type="OrthoDB" id="25887at2759"/>
<dbReference type="PhylomeDB" id="Q99KJ0"/>
<dbReference type="TreeFam" id="TF312973"/>
<dbReference type="BioGRID-ORCS" id="217379">
    <property type="hits" value="11 hits in 76 CRISPR screens"/>
</dbReference>
<dbReference type="ChiTaRS" id="Ubxn2a">
    <property type="organism name" value="mouse"/>
</dbReference>
<dbReference type="PRO" id="PR:Q99KJ0"/>
<dbReference type="Proteomes" id="UP000000589">
    <property type="component" value="Chromosome 12"/>
</dbReference>
<dbReference type="RNAct" id="Q99KJ0">
    <property type="molecule type" value="protein"/>
</dbReference>
<dbReference type="Bgee" id="ENSMUSG00000020634">
    <property type="expression patterns" value="Expressed in pontine nuclear group and 231 other cell types or tissues"/>
</dbReference>
<dbReference type="ExpressionAtlas" id="Q99KJ0">
    <property type="expression patterns" value="baseline and differential"/>
</dbReference>
<dbReference type="GO" id="GO:0005801">
    <property type="term" value="C:cis-Golgi network"/>
    <property type="evidence" value="ECO:0000314"/>
    <property type="project" value="MGI"/>
</dbReference>
<dbReference type="GO" id="GO:0005829">
    <property type="term" value="C:cytosol"/>
    <property type="evidence" value="ECO:0000314"/>
    <property type="project" value="MGI"/>
</dbReference>
<dbReference type="GO" id="GO:0030425">
    <property type="term" value="C:dendrite"/>
    <property type="evidence" value="ECO:0007669"/>
    <property type="project" value="UniProtKB-SubCell"/>
</dbReference>
<dbReference type="GO" id="GO:0005783">
    <property type="term" value="C:endoplasmic reticulum"/>
    <property type="evidence" value="ECO:0000314"/>
    <property type="project" value="UniProtKB"/>
</dbReference>
<dbReference type="GO" id="GO:0005794">
    <property type="term" value="C:Golgi apparatus"/>
    <property type="evidence" value="ECO:0000314"/>
    <property type="project" value="UniProtKB"/>
</dbReference>
<dbReference type="GO" id="GO:0005634">
    <property type="term" value="C:nucleus"/>
    <property type="evidence" value="ECO:0000250"/>
    <property type="project" value="UniProtKB"/>
</dbReference>
<dbReference type="GO" id="GO:0043204">
    <property type="term" value="C:perikaryon"/>
    <property type="evidence" value="ECO:0007669"/>
    <property type="project" value="UniProtKB-SubCell"/>
</dbReference>
<dbReference type="GO" id="GO:0033130">
    <property type="term" value="F:acetylcholine receptor binding"/>
    <property type="evidence" value="ECO:0000353"/>
    <property type="project" value="MGI"/>
</dbReference>
<dbReference type="GO" id="GO:1990830">
    <property type="term" value="P:cellular response to leukemia inhibitory factor"/>
    <property type="evidence" value="ECO:0000270"/>
    <property type="project" value="MGI"/>
</dbReference>
<dbReference type="GO" id="GO:1904293">
    <property type="term" value="P:negative regulation of ERAD pathway"/>
    <property type="evidence" value="ECO:0000250"/>
    <property type="project" value="UniProtKB"/>
</dbReference>
<dbReference type="GO" id="GO:0045861">
    <property type="term" value="P:negative regulation of proteolysis"/>
    <property type="evidence" value="ECO:0000250"/>
    <property type="project" value="UniProtKB"/>
</dbReference>
<dbReference type="GO" id="GO:0045732">
    <property type="term" value="P:positive regulation of protein catabolic process"/>
    <property type="evidence" value="ECO:0000250"/>
    <property type="project" value="UniProtKB"/>
</dbReference>
<dbReference type="GO" id="GO:0010468">
    <property type="term" value="P:regulation of gene expression"/>
    <property type="evidence" value="ECO:0000266"/>
    <property type="project" value="MGI"/>
</dbReference>
<dbReference type="GO" id="GO:0042176">
    <property type="term" value="P:regulation of protein catabolic process"/>
    <property type="evidence" value="ECO:0000314"/>
    <property type="project" value="MGI"/>
</dbReference>
<dbReference type="GO" id="GO:0031396">
    <property type="term" value="P:regulation of protein ubiquitination"/>
    <property type="evidence" value="ECO:0000314"/>
    <property type="project" value="MGI"/>
</dbReference>
<dbReference type="CDD" id="cd17160">
    <property type="entry name" value="UBX_UBXN2A"/>
    <property type="match status" value="1"/>
</dbReference>
<dbReference type="FunFam" id="3.10.20.90:FF:000164">
    <property type="entry name" value="UBX domain-containing protein 2A"/>
    <property type="match status" value="1"/>
</dbReference>
<dbReference type="FunFam" id="3.30.420.210:FF:000004">
    <property type="entry name" value="UBX domain-containing protein 2A"/>
    <property type="match status" value="1"/>
</dbReference>
<dbReference type="Gene3D" id="3.10.20.90">
    <property type="entry name" value="Phosphatidylinositol 3-kinase Catalytic Subunit, Chain A, domain 1"/>
    <property type="match status" value="1"/>
</dbReference>
<dbReference type="Gene3D" id="3.30.420.210">
    <property type="entry name" value="SEP domain"/>
    <property type="match status" value="1"/>
</dbReference>
<dbReference type="InterPro" id="IPR036241">
    <property type="entry name" value="NSFL1C_SEP_dom_sf"/>
</dbReference>
<dbReference type="InterPro" id="IPR012989">
    <property type="entry name" value="SEP_domain"/>
</dbReference>
<dbReference type="InterPro" id="IPR029071">
    <property type="entry name" value="Ubiquitin-like_domsf"/>
</dbReference>
<dbReference type="InterPro" id="IPR001012">
    <property type="entry name" value="UBX_dom"/>
</dbReference>
<dbReference type="PANTHER" id="PTHR23333">
    <property type="entry name" value="UBX DOMAIN CONTAINING PROTEIN"/>
    <property type="match status" value="1"/>
</dbReference>
<dbReference type="PANTHER" id="PTHR23333:SF16">
    <property type="entry name" value="UBX DOMAIN-CONTAINING PROTEIN 2A"/>
    <property type="match status" value="1"/>
</dbReference>
<dbReference type="Pfam" id="PF08059">
    <property type="entry name" value="SEP"/>
    <property type="match status" value="1"/>
</dbReference>
<dbReference type="Pfam" id="PF00789">
    <property type="entry name" value="UBX"/>
    <property type="match status" value="1"/>
</dbReference>
<dbReference type="SMART" id="SM00553">
    <property type="entry name" value="SEP"/>
    <property type="match status" value="1"/>
</dbReference>
<dbReference type="SMART" id="SM00166">
    <property type="entry name" value="UBX"/>
    <property type="match status" value="1"/>
</dbReference>
<dbReference type="SUPFAM" id="SSF102848">
    <property type="entry name" value="NSFL1 (p97 ATPase) cofactor p47, SEP domain"/>
    <property type="match status" value="1"/>
</dbReference>
<dbReference type="SUPFAM" id="SSF54236">
    <property type="entry name" value="Ubiquitin-like"/>
    <property type="match status" value="1"/>
</dbReference>
<dbReference type="PROSITE" id="PS51399">
    <property type="entry name" value="SEP"/>
    <property type="match status" value="1"/>
</dbReference>
<dbReference type="PROSITE" id="PS50033">
    <property type="entry name" value="UBX"/>
    <property type="match status" value="1"/>
</dbReference>
<comment type="function">
    <text evidence="1 5">Acts to repress the ubiquitination and subsequent endoplasmic reticulum-associated degradation of CHRNA3 by the STUB1-VCP-UBXN2A complex in cortical neurons (PubMed:19474315). Also acts to promote the translocation of CHRNA3 to the plasma membrane and subsequently increases plasma membrane acetylcholine-gated ion-channel activation (PubMed:19474315). Plays a role in the inhibition of STUB1-mediated TP53 degradation, via its interaction with HSPA9 which acts to inhibit TP53 binding to HSPA9 (By similarity). Positively mediates the ubiquitination and proteosomal degradation of RICTOR, may thereby act as a negative regulator of the mTORC2 pathway (By similarity).</text>
</comment>
<comment type="subunit">
    <text evidence="1 5">Part of a complex composed of STUB1/CHIP, VCP/p97, CHRNA3, and UBXN2A that modulates the ubiquitination and endoplasmic reticulum-associated degradation (ERAD) of CHRNA3 (By similarity). Within the complex UBXN2A acts as a scaffold protein required for the interaction of CHRNA3 with VCP/p97, this interaction also inhibits CHRNA3 ubiquitination by STUB1/CHIP and subsequently ERAD (PubMed:19474315). Interacts (via SEP domain) with CHRNA3 and interacts (via UBX domain) with VCP/P97; these interactions are required for the interaction of CHRNA3 with the STUB1-VCP-UBXN2A complex (PubMed:19474315). Interacts with HSPA9/MOT-2 (via SBD domain); the interaction inhibits HSPA9/MOT-2 interaction with and degradation of p53, thereby promotes p53 translocation to the nucleus (By similarity). Interacts with RICTOR (By similarity).</text>
</comment>
<comment type="subcellular location">
    <subcellularLocation>
        <location evidence="6">Golgi apparatus</location>
    </subcellularLocation>
    <subcellularLocation>
        <location evidence="6">Endoplasmic reticulum</location>
    </subcellularLocation>
    <subcellularLocation>
        <location evidence="6">Perikaryon</location>
    </subcellularLocation>
    <subcellularLocation>
        <location evidence="6">Cell projection</location>
        <location evidence="6">Dendrite</location>
    </subcellularLocation>
    <subcellularLocation>
        <location evidence="1">Nucleus</location>
    </subcellularLocation>
    <subcellularLocation>
        <location evidence="1">Cytoplasm</location>
    </subcellularLocation>
    <text evidence="6">Expressed at the axon initial segment.</text>
</comment>
<comment type="tissue specificity">
    <text evidence="5 6">Expressed in the prefrontal cortex (at protein level) (PubMed:19474315, PubMed:26265139). Expressed in the habenula and hippocampus (at protein level) (PubMed:19474315). Expressed in peripheral ganglia (PubMed:19474315).</text>
</comment>
<comment type="PTM">
    <text evidence="5">Ubiquitinated.</text>
</comment>
<comment type="disruption phenotype">
    <text evidence="7">Knockout mice are embryonically lethal.</text>
</comment>